<dbReference type="EMBL" id="CP000270">
    <property type="protein sequence ID" value="ABE32616.1"/>
    <property type="molecule type" value="Genomic_DNA"/>
</dbReference>
<dbReference type="RefSeq" id="WP_011490055.1">
    <property type="nucleotide sequence ID" value="NC_007951.1"/>
</dbReference>
<dbReference type="SMR" id="Q13TH3"/>
<dbReference type="STRING" id="266265.Bxe_A0317"/>
<dbReference type="KEGG" id="bxb:DR64_2487"/>
<dbReference type="KEGG" id="bxe:Bxe_A0317"/>
<dbReference type="PATRIC" id="fig|266265.5.peg.4308"/>
<dbReference type="eggNOG" id="COG0090">
    <property type="taxonomic scope" value="Bacteria"/>
</dbReference>
<dbReference type="OrthoDB" id="9778722at2"/>
<dbReference type="Proteomes" id="UP000001817">
    <property type="component" value="Chromosome 1"/>
</dbReference>
<dbReference type="GO" id="GO:0015934">
    <property type="term" value="C:large ribosomal subunit"/>
    <property type="evidence" value="ECO:0007669"/>
    <property type="project" value="InterPro"/>
</dbReference>
<dbReference type="GO" id="GO:0019843">
    <property type="term" value="F:rRNA binding"/>
    <property type="evidence" value="ECO:0007669"/>
    <property type="project" value="UniProtKB-UniRule"/>
</dbReference>
<dbReference type="GO" id="GO:0003735">
    <property type="term" value="F:structural constituent of ribosome"/>
    <property type="evidence" value="ECO:0007669"/>
    <property type="project" value="InterPro"/>
</dbReference>
<dbReference type="GO" id="GO:0016740">
    <property type="term" value="F:transferase activity"/>
    <property type="evidence" value="ECO:0007669"/>
    <property type="project" value="InterPro"/>
</dbReference>
<dbReference type="GO" id="GO:0002181">
    <property type="term" value="P:cytoplasmic translation"/>
    <property type="evidence" value="ECO:0007669"/>
    <property type="project" value="TreeGrafter"/>
</dbReference>
<dbReference type="FunFam" id="2.30.30.30:FF:000001">
    <property type="entry name" value="50S ribosomal protein L2"/>
    <property type="match status" value="1"/>
</dbReference>
<dbReference type="FunFam" id="2.40.50.140:FF:000003">
    <property type="entry name" value="50S ribosomal protein L2"/>
    <property type="match status" value="1"/>
</dbReference>
<dbReference type="FunFam" id="4.10.950.10:FF:000001">
    <property type="entry name" value="50S ribosomal protein L2"/>
    <property type="match status" value="1"/>
</dbReference>
<dbReference type="Gene3D" id="2.30.30.30">
    <property type="match status" value="1"/>
</dbReference>
<dbReference type="Gene3D" id="2.40.50.140">
    <property type="entry name" value="Nucleic acid-binding proteins"/>
    <property type="match status" value="1"/>
</dbReference>
<dbReference type="Gene3D" id="4.10.950.10">
    <property type="entry name" value="Ribosomal protein L2, domain 3"/>
    <property type="match status" value="1"/>
</dbReference>
<dbReference type="HAMAP" id="MF_01320_B">
    <property type="entry name" value="Ribosomal_uL2_B"/>
    <property type="match status" value="1"/>
</dbReference>
<dbReference type="InterPro" id="IPR012340">
    <property type="entry name" value="NA-bd_OB-fold"/>
</dbReference>
<dbReference type="InterPro" id="IPR014722">
    <property type="entry name" value="Rib_uL2_dom2"/>
</dbReference>
<dbReference type="InterPro" id="IPR002171">
    <property type="entry name" value="Ribosomal_uL2"/>
</dbReference>
<dbReference type="InterPro" id="IPR005880">
    <property type="entry name" value="Ribosomal_uL2_bac/org-type"/>
</dbReference>
<dbReference type="InterPro" id="IPR022669">
    <property type="entry name" value="Ribosomal_uL2_C"/>
</dbReference>
<dbReference type="InterPro" id="IPR022671">
    <property type="entry name" value="Ribosomal_uL2_CS"/>
</dbReference>
<dbReference type="InterPro" id="IPR014726">
    <property type="entry name" value="Ribosomal_uL2_dom3"/>
</dbReference>
<dbReference type="InterPro" id="IPR022666">
    <property type="entry name" value="Ribosomal_uL2_RNA-bd_dom"/>
</dbReference>
<dbReference type="InterPro" id="IPR008991">
    <property type="entry name" value="Translation_prot_SH3-like_sf"/>
</dbReference>
<dbReference type="NCBIfam" id="TIGR01171">
    <property type="entry name" value="rplB_bact"/>
    <property type="match status" value="1"/>
</dbReference>
<dbReference type="PANTHER" id="PTHR13691:SF5">
    <property type="entry name" value="LARGE RIBOSOMAL SUBUNIT PROTEIN UL2M"/>
    <property type="match status" value="1"/>
</dbReference>
<dbReference type="PANTHER" id="PTHR13691">
    <property type="entry name" value="RIBOSOMAL PROTEIN L2"/>
    <property type="match status" value="1"/>
</dbReference>
<dbReference type="Pfam" id="PF00181">
    <property type="entry name" value="Ribosomal_L2"/>
    <property type="match status" value="1"/>
</dbReference>
<dbReference type="Pfam" id="PF03947">
    <property type="entry name" value="Ribosomal_L2_C"/>
    <property type="match status" value="1"/>
</dbReference>
<dbReference type="PIRSF" id="PIRSF002158">
    <property type="entry name" value="Ribosomal_L2"/>
    <property type="match status" value="1"/>
</dbReference>
<dbReference type="SMART" id="SM01383">
    <property type="entry name" value="Ribosomal_L2"/>
    <property type="match status" value="1"/>
</dbReference>
<dbReference type="SMART" id="SM01382">
    <property type="entry name" value="Ribosomal_L2_C"/>
    <property type="match status" value="1"/>
</dbReference>
<dbReference type="SUPFAM" id="SSF50249">
    <property type="entry name" value="Nucleic acid-binding proteins"/>
    <property type="match status" value="1"/>
</dbReference>
<dbReference type="SUPFAM" id="SSF50104">
    <property type="entry name" value="Translation proteins SH3-like domain"/>
    <property type="match status" value="1"/>
</dbReference>
<dbReference type="PROSITE" id="PS00467">
    <property type="entry name" value="RIBOSOMAL_L2"/>
    <property type="match status" value="1"/>
</dbReference>
<organism>
    <name type="scientific">Paraburkholderia xenovorans (strain LB400)</name>
    <dbReference type="NCBI Taxonomy" id="266265"/>
    <lineage>
        <taxon>Bacteria</taxon>
        <taxon>Pseudomonadati</taxon>
        <taxon>Pseudomonadota</taxon>
        <taxon>Betaproteobacteria</taxon>
        <taxon>Burkholderiales</taxon>
        <taxon>Burkholderiaceae</taxon>
        <taxon>Paraburkholderia</taxon>
    </lineage>
</organism>
<proteinExistence type="inferred from homology"/>
<reference key="1">
    <citation type="journal article" date="2006" name="Proc. Natl. Acad. Sci. U.S.A.">
        <title>Burkholderia xenovorans LB400 harbors a multi-replicon, 9.73-Mbp genome shaped for versatility.</title>
        <authorList>
            <person name="Chain P.S.G."/>
            <person name="Denef V.J."/>
            <person name="Konstantinidis K.T."/>
            <person name="Vergez L.M."/>
            <person name="Agullo L."/>
            <person name="Reyes V.L."/>
            <person name="Hauser L."/>
            <person name="Cordova M."/>
            <person name="Gomez L."/>
            <person name="Gonzalez M."/>
            <person name="Land M."/>
            <person name="Lao V."/>
            <person name="Larimer F."/>
            <person name="LiPuma J.J."/>
            <person name="Mahenthiralingam E."/>
            <person name="Malfatti S.A."/>
            <person name="Marx C.J."/>
            <person name="Parnell J.J."/>
            <person name="Ramette A."/>
            <person name="Richardson P."/>
            <person name="Seeger M."/>
            <person name="Smith D."/>
            <person name="Spilker T."/>
            <person name="Sul W.J."/>
            <person name="Tsoi T.V."/>
            <person name="Ulrich L.E."/>
            <person name="Zhulin I.B."/>
            <person name="Tiedje J.M."/>
        </authorList>
    </citation>
    <scope>NUCLEOTIDE SEQUENCE [LARGE SCALE GENOMIC DNA]</scope>
    <source>
        <strain>LB400</strain>
    </source>
</reference>
<accession>Q13TH3</accession>
<sequence length="275" mass="30107">MAIVKVKPTSPGRRAMVKVVNKDLHKGKPFAPLLDSQSTTAGRNNNGHITTRHKGGGHKHHYRVVDFRRNKDGIAAKVERLEYDPNRSANIALVLYADGERRYIIAPKGVTVGQQLMSGSEAPIRAGNTLPIRNIPVGTTIHCIEMLPGKGAQMARSAGTSAMLLAREGIYAQVRLRSGEIRRVHVECRATIGEVGNEEHSLRQIGKAGANRWRGIRPTVRGVAMNPVDHPHGGGEGKTAAGRDPVSPWGTPTKGYRTRSNKRTTSMIVQRRHKR</sequence>
<keyword id="KW-1185">Reference proteome</keyword>
<keyword id="KW-0687">Ribonucleoprotein</keyword>
<keyword id="KW-0689">Ribosomal protein</keyword>
<keyword id="KW-0694">RNA-binding</keyword>
<keyword id="KW-0699">rRNA-binding</keyword>
<feature type="chain" id="PRO_0000309889" description="Large ribosomal subunit protein uL2">
    <location>
        <begin position="1"/>
        <end position="275"/>
    </location>
</feature>
<feature type="region of interest" description="Disordered" evidence="2">
    <location>
        <begin position="28"/>
        <end position="59"/>
    </location>
</feature>
<feature type="region of interest" description="Disordered" evidence="2">
    <location>
        <begin position="224"/>
        <end position="275"/>
    </location>
</feature>
<feature type="compositionally biased region" description="Polar residues" evidence="2">
    <location>
        <begin position="35"/>
        <end position="49"/>
    </location>
</feature>
<feature type="compositionally biased region" description="Basic residues" evidence="2">
    <location>
        <begin position="50"/>
        <end position="59"/>
    </location>
</feature>
<name>RL2_PARXL</name>
<gene>
    <name evidence="1" type="primary">rplB</name>
    <name type="ordered locus">Bxeno_A4078</name>
    <name type="ORF">Bxe_A0317</name>
</gene>
<protein>
    <recommendedName>
        <fullName evidence="1">Large ribosomal subunit protein uL2</fullName>
    </recommendedName>
    <alternativeName>
        <fullName evidence="3">50S ribosomal protein L2</fullName>
    </alternativeName>
</protein>
<evidence type="ECO:0000255" key="1">
    <source>
        <dbReference type="HAMAP-Rule" id="MF_01320"/>
    </source>
</evidence>
<evidence type="ECO:0000256" key="2">
    <source>
        <dbReference type="SAM" id="MobiDB-lite"/>
    </source>
</evidence>
<evidence type="ECO:0000305" key="3"/>
<comment type="function">
    <text evidence="1">One of the primary rRNA binding proteins. Required for association of the 30S and 50S subunits to form the 70S ribosome, for tRNA binding and peptide bond formation. It has been suggested to have peptidyltransferase activity; this is somewhat controversial. Makes several contacts with the 16S rRNA in the 70S ribosome.</text>
</comment>
<comment type="subunit">
    <text evidence="1">Part of the 50S ribosomal subunit. Forms a bridge to the 30S subunit in the 70S ribosome.</text>
</comment>
<comment type="similarity">
    <text evidence="1">Belongs to the universal ribosomal protein uL2 family.</text>
</comment>